<comment type="function">
    <text evidence="1">Component of the NOP7 complex, which is required for maturation of the 25S and 5.8S ribosomal RNAs and formation of the 60S ribosome.</text>
</comment>
<comment type="subunit">
    <text evidence="1">Component of the NOP7 complex, composed of ERB1, NOP7 and YTM1. The complex is held together by ERB1, which interacts with NOP7 via its N-terminal domain and with YTM1 via a high-affinity interaction between the seven-bladed beta-propeller domains of the 2 proteins. The NOP7 complex associates with the 66S pre-ribosome.</text>
</comment>
<comment type="subcellular location">
    <subcellularLocation>
        <location evidence="1">Nucleus</location>
        <location evidence="1">Nucleolus</location>
    </subcellularLocation>
    <subcellularLocation>
        <location evidence="1">Nucleus</location>
        <location evidence="1">Nucleoplasm</location>
    </subcellularLocation>
</comment>
<comment type="similarity">
    <text evidence="1">Belongs to the pescadillo family.</text>
</comment>
<gene>
    <name evidence="1" type="primary">NOP7</name>
    <name type="ordered locus">CAGL0G07843g</name>
</gene>
<reference key="1">
    <citation type="journal article" date="2004" name="Nature">
        <title>Genome evolution in yeasts.</title>
        <authorList>
            <person name="Dujon B."/>
            <person name="Sherman D."/>
            <person name="Fischer G."/>
            <person name="Durrens P."/>
            <person name="Casaregola S."/>
            <person name="Lafontaine I."/>
            <person name="de Montigny J."/>
            <person name="Marck C."/>
            <person name="Neuveglise C."/>
            <person name="Talla E."/>
            <person name="Goffard N."/>
            <person name="Frangeul L."/>
            <person name="Aigle M."/>
            <person name="Anthouard V."/>
            <person name="Babour A."/>
            <person name="Barbe V."/>
            <person name="Barnay S."/>
            <person name="Blanchin S."/>
            <person name="Beckerich J.-M."/>
            <person name="Beyne E."/>
            <person name="Bleykasten C."/>
            <person name="Boisrame A."/>
            <person name="Boyer J."/>
            <person name="Cattolico L."/>
            <person name="Confanioleri F."/>
            <person name="de Daruvar A."/>
            <person name="Despons L."/>
            <person name="Fabre E."/>
            <person name="Fairhead C."/>
            <person name="Ferry-Dumazet H."/>
            <person name="Groppi A."/>
            <person name="Hantraye F."/>
            <person name="Hennequin C."/>
            <person name="Jauniaux N."/>
            <person name="Joyet P."/>
            <person name="Kachouri R."/>
            <person name="Kerrest A."/>
            <person name="Koszul R."/>
            <person name="Lemaire M."/>
            <person name="Lesur I."/>
            <person name="Ma L."/>
            <person name="Muller H."/>
            <person name="Nicaud J.-M."/>
            <person name="Nikolski M."/>
            <person name="Oztas S."/>
            <person name="Ozier-Kalogeropoulos O."/>
            <person name="Pellenz S."/>
            <person name="Potier S."/>
            <person name="Richard G.-F."/>
            <person name="Straub M.-L."/>
            <person name="Suleau A."/>
            <person name="Swennen D."/>
            <person name="Tekaia F."/>
            <person name="Wesolowski-Louvel M."/>
            <person name="Westhof E."/>
            <person name="Wirth B."/>
            <person name="Zeniou-Meyer M."/>
            <person name="Zivanovic Y."/>
            <person name="Bolotin-Fukuhara M."/>
            <person name="Thierry A."/>
            <person name="Bouchier C."/>
            <person name="Caudron B."/>
            <person name="Scarpelli C."/>
            <person name="Gaillardin C."/>
            <person name="Weissenbach J."/>
            <person name="Wincker P."/>
            <person name="Souciet J.-L."/>
        </authorList>
    </citation>
    <scope>NUCLEOTIDE SEQUENCE [LARGE SCALE GENOMIC DNA]</scope>
    <source>
        <strain>ATCC 2001 / BCRC 20586 / JCM 3761 / NBRC 0622 / NRRL Y-65 / CBS 138</strain>
    </source>
</reference>
<proteinExistence type="inferred from homology"/>
<keyword id="KW-0175">Coiled coil</keyword>
<keyword id="KW-0539">Nucleus</keyword>
<keyword id="KW-1185">Reference proteome</keyword>
<keyword id="KW-0690">Ribosome biogenesis</keyword>
<keyword id="KW-0698">rRNA processing</keyword>
<evidence type="ECO:0000255" key="1">
    <source>
        <dbReference type="HAMAP-Rule" id="MF_03028"/>
    </source>
</evidence>
<evidence type="ECO:0000256" key="2">
    <source>
        <dbReference type="SAM" id="MobiDB-lite"/>
    </source>
</evidence>
<protein>
    <recommendedName>
        <fullName evidence="1">Pescadillo homolog</fullName>
    </recommendedName>
    <alternativeName>
        <fullName evidence="1">Nucleolar protein 7 homolog</fullName>
    </alternativeName>
</protein>
<sequence>MRVKKRNVRGNAKNFITRSQAVRKLQISLADFRRLCIFKGIYPREPKNKKKANKGSTAPTTFYYAKDIQYLMHEPVLAKFREHKTFARKLTRALGRGEVSSAKKLEENRSTYKLDHIIKERYPSFPDAVRDIDDALNMLFLFANLPATNQISSRVIRDAQVICNQWLAYVAKERLIRKVFVSIKGIYYQANVKGEEVRWVIPFKFPENIPSDIDFRIMMTFLEFYSTLLHFVLFKLYTDSGLVYPPKIDVEQDKILSGINAYILESQEETSVLNAEVPSDAPDKEAQSIDTKTLAQAMKADSKDKDDNSNDEAPENVEDVELDEFEDHNKNKGDILAQPSKFSSPTATLFEDFVFYVGREVPIEAIEFLILSCGGKVISEAAMDQIEGNTEFDLSKVTHQIVDRPVLKHKVAGRTYIQPQWVFDCINKGELLSANLYLPGVSLPPHLSPWGDALGYDPTKEVESEDESSDSSEESDSEIENEEEDTKPAAITNEDDDEDVEELAAQKELELEASGIAYSKAKDEGLHDDVASKKKRKVTDEDEEEKKLKMIMMSNKQRKLYKKMKYSNQQKEDKIEELKKKKKQLAKKEKTLKKVEKK</sequence>
<organism>
    <name type="scientific">Candida glabrata (strain ATCC 2001 / BCRC 20586 / JCM 3761 / NBRC 0622 / NRRL Y-65 / CBS 138)</name>
    <name type="common">Yeast</name>
    <name type="synonym">Nakaseomyces glabratus</name>
    <dbReference type="NCBI Taxonomy" id="284593"/>
    <lineage>
        <taxon>Eukaryota</taxon>
        <taxon>Fungi</taxon>
        <taxon>Dikarya</taxon>
        <taxon>Ascomycota</taxon>
        <taxon>Saccharomycotina</taxon>
        <taxon>Saccharomycetes</taxon>
        <taxon>Saccharomycetales</taxon>
        <taxon>Saccharomycetaceae</taxon>
        <taxon>Nakaseomyces</taxon>
    </lineage>
</organism>
<name>PESC_CANGA</name>
<feature type="chain" id="PRO_0000370485" description="Pescadillo homolog">
    <location>
        <begin position="1"/>
        <end position="598"/>
    </location>
</feature>
<feature type="domain" description="BRCT" evidence="1">
    <location>
        <begin position="345"/>
        <end position="439"/>
    </location>
</feature>
<feature type="region of interest" description="Disordered" evidence="2">
    <location>
        <begin position="296"/>
        <end position="317"/>
    </location>
</feature>
<feature type="region of interest" description="Disordered" evidence="2">
    <location>
        <begin position="452"/>
        <end position="501"/>
    </location>
</feature>
<feature type="region of interest" description="Disordered" evidence="2">
    <location>
        <begin position="515"/>
        <end position="544"/>
    </location>
</feature>
<feature type="region of interest" description="Disordered" evidence="2">
    <location>
        <begin position="564"/>
        <end position="598"/>
    </location>
</feature>
<feature type="coiled-coil region" evidence="1">
    <location>
        <begin position="557"/>
        <end position="598"/>
    </location>
</feature>
<feature type="compositionally biased region" description="Acidic residues" evidence="2">
    <location>
        <begin position="463"/>
        <end position="485"/>
    </location>
</feature>
<feature type="compositionally biased region" description="Basic and acidic residues" evidence="2">
    <location>
        <begin position="520"/>
        <end position="532"/>
    </location>
</feature>
<feature type="compositionally biased region" description="Basic and acidic residues" evidence="2">
    <location>
        <begin position="570"/>
        <end position="579"/>
    </location>
</feature>
<feature type="compositionally biased region" description="Basic and acidic residues" evidence="2">
    <location>
        <begin position="586"/>
        <end position="598"/>
    </location>
</feature>
<dbReference type="EMBL" id="CR380953">
    <property type="protein sequence ID" value="CAG59630.1"/>
    <property type="molecule type" value="Genomic_DNA"/>
</dbReference>
<dbReference type="RefSeq" id="XP_446703.1">
    <property type="nucleotide sequence ID" value="XM_446703.1"/>
</dbReference>
<dbReference type="SMR" id="Q6FSU1"/>
<dbReference type="FunCoup" id="Q6FSU1">
    <property type="interactions" value="1467"/>
</dbReference>
<dbReference type="STRING" id="284593.Q6FSU1"/>
<dbReference type="EnsemblFungi" id="CAGL0G07843g-T">
    <property type="protein sequence ID" value="CAGL0G07843g-T-p1"/>
    <property type="gene ID" value="CAGL0G07843g"/>
</dbReference>
<dbReference type="KEGG" id="cgr:2888380"/>
<dbReference type="CGD" id="CAL0137773">
    <property type="gene designation" value="CAGL0G07843g"/>
</dbReference>
<dbReference type="VEuPathDB" id="FungiDB:B1J91_G07843g"/>
<dbReference type="VEuPathDB" id="FungiDB:CAGL0G07843g"/>
<dbReference type="eggNOG" id="KOG2481">
    <property type="taxonomic scope" value="Eukaryota"/>
</dbReference>
<dbReference type="HOGENOM" id="CLU_019619_1_1_1"/>
<dbReference type="InParanoid" id="Q6FSU1"/>
<dbReference type="Proteomes" id="UP000002428">
    <property type="component" value="Chromosome G"/>
</dbReference>
<dbReference type="GO" id="GO:0005654">
    <property type="term" value="C:nucleoplasm"/>
    <property type="evidence" value="ECO:0007669"/>
    <property type="project" value="UniProtKB-SubCell"/>
</dbReference>
<dbReference type="GO" id="GO:0070545">
    <property type="term" value="C:PeBoW complex"/>
    <property type="evidence" value="ECO:0007669"/>
    <property type="project" value="EnsemblFungi"/>
</dbReference>
<dbReference type="GO" id="GO:0030687">
    <property type="term" value="C:preribosome, large subunit precursor"/>
    <property type="evidence" value="ECO:0007669"/>
    <property type="project" value="UniProtKB-UniRule"/>
</dbReference>
<dbReference type="GO" id="GO:0070180">
    <property type="term" value="F:large ribosomal subunit rRNA binding"/>
    <property type="evidence" value="ECO:0007669"/>
    <property type="project" value="EnsemblFungi"/>
</dbReference>
<dbReference type="GO" id="GO:0043021">
    <property type="term" value="F:ribonucleoprotein complex binding"/>
    <property type="evidence" value="ECO:0007669"/>
    <property type="project" value="UniProtKB-UniRule"/>
</dbReference>
<dbReference type="GO" id="GO:0000466">
    <property type="term" value="P:maturation of 5.8S rRNA from tricistronic rRNA transcript (SSU-rRNA, 5.8S rRNA, LSU-rRNA)"/>
    <property type="evidence" value="ECO:0007669"/>
    <property type="project" value="UniProtKB-UniRule"/>
</dbReference>
<dbReference type="GO" id="GO:0000463">
    <property type="term" value="P:maturation of LSU-rRNA from tricistronic rRNA transcript (SSU-rRNA, 5.8S rRNA, LSU-rRNA)"/>
    <property type="evidence" value="ECO:0007669"/>
    <property type="project" value="UniProtKB-UniRule"/>
</dbReference>
<dbReference type="GO" id="GO:0000462">
    <property type="term" value="P:maturation of SSU-rRNA from tricistronic rRNA transcript (SSU-rRNA, 5.8S rRNA, LSU-rRNA)"/>
    <property type="evidence" value="ECO:0007669"/>
    <property type="project" value="EnsemblFungi"/>
</dbReference>
<dbReference type="CDD" id="cd17709">
    <property type="entry name" value="BRCT_pescadillo_like"/>
    <property type="match status" value="1"/>
</dbReference>
<dbReference type="FunFam" id="3.40.50.10190:FF:000067">
    <property type="entry name" value="Pescadillo homolog"/>
    <property type="match status" value="1"/>
</dbReference>
<dbReference type="Gene3D" id="3.40.50.10190">
    <property type="entry name" value="BRCT domain"/>
    <property type="match status" value="1"/>
</dbReference>
<dbReference type="HAMAP" id="MF_03028">
    <property type="entry name" value="Pescadillo"/>
    <property type="match status" value="1"/>
</dbReference>
<dbReference type="InterPro" id="IPR001357">
    <property type="entry name" value="BRCT_dom"/>
</dbReference>
<dbReference type="InterPro" id="IPR036420">
    <property type="entry name" value="BRCT_dom_sf"/>
</dbReference>
<dbReference type="InterPro" id="IPR010613">
    <property type="entry name" value="PES"/>
</dbReference>
<dbReference type="PANTHER" id="PTHR12221">
    <property type="entry name" value="PESCADILLO - RELATED"/>
    <property type="match status" value="1"/>
</dbReference>
<dbReference type="PANTHER" id="PTHR12221:SF6">
    <property type="entry name" value="PESCADILLO HOMOLOG"/>
    <property type="match status" value="1"/>
</dbReference>
<dbReference type="Pfam" id="PF16589">
    <property type="entry name" value="BRCT_2"/>
    <property type="match status" value="1"/>
</dbReference>
<dbReference type="Pfam" id="PF06732">
    <property type="entry name" value="Pescadillo_N"/>
    <property type="match status" value="1"/>
</dbReference>
<dbReference type="SMART" id="SM00292">
    <property type="entry name" value="BRCT"/>
    <property type="match status" value="1"/>
</dbReference>
<dbReference type="SUPFAM" id="SSF52113">
    <property type="entry name" value="BRCT domain"/>
    <property type="match status" value="1"/>
</dbReference>
<dbReference type="PROSITE" id="PS50172">
    <property type="entry name" value="BRCT"/>
    <property type="match status" value="1"/>
</dbReference>
<accession>Q6FSU1</accession>